<sequence length="539" mass="59444">MHTWRFRRPFREPAINRTDRMRDHFSIDHKRTPRRRLSVKAILALDQGTTSSRAILFAHDGSIIGVSQKEFTQHYPKPGWVEHDATEIWTTQLAVARDVLKQHDMDVSDIEAIGITNQRETTLVWDRATGEPIHNAIVWQDRRTASDCDALRNAGHSDCVQKKTGLIIDAYFCATKLRWILDNVAGARERAENGELAFGTIDSWLFWNLTGGKLHATDVTNASRTMLWNIHTGQWDDELLALFKVPKEVLPSVHPSSHIYGETESSLFGKSIPLGGAAGDQQSALFGQNCTQPGMAKNTYGTGCFMLMNIGEEAAASPSRLLTTVACWDGGKREYAYEGSIFIAGAIVQWLRDGLGIIQSSSEVESLAASVDDTDGVYLVPAFAGLGAPHWDAYARGILVGLTRGTTKAHIARAALEGIAFQVADVLDAMRKDSGVAIEELRVDGGAAANDLLMQFQADIIGARVVRPKVIETTAAGAAYVAGLATGFWKDSADIERIWETDRVFEPQMPAEEVARRRRRWAAALERSKQWVEQEASAD</sequence>
<feature type="chain" id="PRO_0000059484" description="Glycerol kinase">
    <location>
        <begin position="1"/>
        <end position="539"/>
    </location>
</feature>
<feature type="binding site" evidence="1">
    <location>
        <position position="49"/>
    </location>
    <ligand>
        <name>ADP</name>
        <dbReference type="ChEBI" id="CHEBI:456216"/>
    </ligand>
</feature>
<feature type="binding site" evidence="1">
    <location>
        <position position="49"/>
    </location>
    <ligand>
        <name>ATP</name>
        <dbReference type="ChEBI" id="CHEBI:30616"/>
    </ligand>
</feature>
<feature type="binding site" evidence="1">
    <location>
        <position position="49"/>
    </location>
    <ligand>
        <name>sn-glycerol 3-phosphate</name>
        <dbReference type="ChEBI" id="CHEBI:57597"/>
    </ligand>
</feature>
<feature type="binding site" evidence="1">
    <location>
        <position position="50"/>
    </location>
    <ligand>
        <name>ATP</name>
        <dbReference type="ChEBI" id="CHEBI:30616"/>
    </ligand>
</feature>
<feature type="binding site" evidence="1">
    <location>
        <position position="51"/>
    </location>
    <ligand>
        <name>ATP</name>
        <dbReference type="ChEBI" id="CHEBI:30616"/>
    </ligand>
</feature>
<feature type="binding site" evidence="1">
    <location>
        <position position="53"/>
    </location>
    <ligand>
        <name>ADP</name>
        <dbReference type="ChEBI" id="CHEBI:456216"/>
    </ligand>
</feature>
<feature type="binding site" evidence="1">
    <location>
        <position position="119"/>
    </location>
    <ligand>
        <name>glycerol</name>
        <dbReference type="ChEBI" id="CHEBI:17754"/>
    </ligand>
</feature>
<feature type="binding site" evidence="1">
    <location>
        <position position="119"/>
    </location>
    <ligand>
        <name>sn-glycerol 3-phosphate</name>
        <dbReference type="ChEBI" id="CHEBI:57597"/>
    </ligand>
</feature>
<feature type="binding site" evidence="1">
    <location>
        <position position="120"/>
    </location>
    <ligand>
        <name>glycerol</name>
        <dbReference type="ChEBI" id="CHEBI:17754"/>
    </ligand>
</feature>
<feature type="binding site" evidence="1">
    <location>
        <position position="120"/>
    </location>
    <ligand>
        <name>sn-glycerol 3-phosphate</name>
        <dbReference type="ChEBI" id="CHEBI:57597"/>
    </ligand>
</feature>
<feature type="binding site" evidence="1">
    <location>
        <position position="171"/>
    </location>
    <ligand>
        <name>glycerol</name>
        <dbReference type="ChEBI" id="CHEBI:17754"/>
    </ligand>
</feature>
<feature type="binding site" evidence="1">
    <location>
        <position position="171"/>
    </location>
    <ligand>
        <name>sn-glycerol 3-phosphate</name>
        <dbReference type="ChEBI" id="CHEBI:57597"/>
    </ligand>
</feature>
<feature type="binding site" evidence="1">
    <location>
        <position position="280"/>
    </location>
    <ligand>
        <name>glycerol</name>
        <dbReference type="ChEBI" id="CHEBI:17754"/>
    </ligand>
</feature>
<feature type="binding site" evidence="1">
    <location>
        <position position="280"/>
    </location>
    <ligand>
        <name>sn-glycerol 3-phosphate</name>
        <dbReference type="ChEBI" id="CHEBI:57597"/>
    </ligand>
</feature>
<feature type="binding site" evidence="1">
    <location>
        <position position="281"/>
    </location>
    <ligand>
        <name>glycerol</name>
        <dbReference type="ChEBI" id="CHEBI:17754"/>
    </ligand>
</feature>
<feature type="binding site" evidence="1">
    <location>
        <position position="302"/>
    </location>
    <ligand>
        <name>ADP</name>
        <dbReference type="ChEBI" id="CHEBI:456216"/>
    </ligand>
</feature>
<feature type="binding site" evidence="1">
    <location>
        <position position="302"/>
    </location>
    <ligand>
        <name>ATP</name>
        <dbReference type="ChEBI" id="CHEBI:30616"/>
    </ligand>
</feature>
<feature type="binding site" evidence="1">
    <location>
        <position position="345"/>
    </location>
    <ligand>
        <name>ADP</name>
        <dbReference type="ChEBI" id="CHEBI:456216"/>
    </ligand>
</feature>
<feature type="binding site" evidence="1">
    <location>
        <position position="345"/>
    </location>
    <ligand>
        <name>ATP</name>
        <dbReference type="ChEBI" id="CHEBI:30616"/>
    </ligand>
</feature>
<feature type="binding site" evidence="1">
    <location>
        <position position="349"/>
    </location>
    <ligand>
        <name>ATP</name>
        <dbReference type="ChEBI" id="CHEBI:30616"/>
    </ligand>
</feature>
<feature type="binding site" evidence="1">
    <location>
        <position position="446"/>
    </location>
    <ligand>
        <name>ADP</name>
        <dbReference type="ChEBI" id="CHEBI:456216"/>
    </ligand>
</feature>
<feature type="binding site" evidence="1">
    <location>
        <position position="446"/>
    </location>
    <ligand>
        <name>ATP</name>
        <dbReference type="ChEBI" id="CHEBI:30616"/>
    </ligand>
</feature>
<feature type="binding site" evidence="1">
    <location>
        <position position="450"/>
    </location>
    <ligand>
        <name>ADP</name>
        <dbReference type="ChEBI" id="CHEBI:456216"/>
    </ligand>
</feature>
<organism>
    <name type="scientific">Rhodopirellula baltica (strain DSM 10527 / NCIMB 13988 / SH1)</name>
    <dbReference type="NCBI Taxonomy" id="243090"/>
    <lineage>
        <taxon>Bacteria</taxon>
        <taxon>Pseudomonadati</taxon>
        <taxon>Planctomycetota</taxon>
        <taxon>Planctomycetia</taxon>
        <taxon>Pirellulales</taxon>
        <taxon>Pirellulaceae</taxon>
        <taxon>Rhodopirellula</taxon>
    </lineage>
</organism>
<protein>
    <recommendedName>
        <fullName evidence="1">Glycerol kinase</fullName>
        <ecNumber evidence="1">2.7.1.30</ecNumber>
    </recommendedName>
    <alternativeName>
        <fullName evidence="1">ATP:glycerol 3-phosphotransferase</fullName>
    </alternativeName>
    <alternativeName>
        <fullName evidence="1">Glycerokinase</fullName>
        <shortName evidence="1">GK</shortName>
    </alternativeName>
</protein>
<comment type="function">
    <text evidence="1">Key enzyme in the regulation of glycerol uptake and metabolism. Catalyzes the phosphorylation of glycerol to yield sn-glycerol 3-phosphate.</text>
</comment>
<comment type="catalytic activity">
    <reaction evidence="1">
        <text>glycerol + ATP = sn-glycerol 3-phosphate + ADP + H(+)</text>
        <dbReference type="Rhea" id="RHEA:21644"/>
        <dbReference type="ChEBI" id="CHEBI:15378"/>
        <dbReference type="ChEBI" id="CHEBI:17754"/>
        <dbReference type="ChEBI" id="CHEBI:30616"/>
        <dbReference type="ChEBI" id="CHEBI:57597"/>
        <dbReference type="ChEBI" id="CHEBI:456216"/>
        <dbReference type="EC" id="2.7.1.30"/>
    </reaction>
</comment>
<comment type="activity regulation">
    <text evidence="1">Inhibited by fructose 1,6-bisphosphate (FBP).</text>
</comment>
<comment type="pathway">
    <text evidence="1">Polyol metabolism; glycerol degradation via glycerol kinase pathway; sn-glycerol 3-phosphate from glycerol: step 1/1.</text>
</comment>
<comment type="similarity">
    <text evidence="1">Belongs to the FGGY kinase family.</text>
</comment>
<accession>Q7UTP4</accession>
<evidence type="ECO:0000255" key="1">
    <source>
        <dbReference type="HAMAP-Rule" id="MF_00186"/>
    </source>
</evidence>
<name>GLPK_RHOBA</name>
<keyword id="KW-0067">ATP-binding</keyword>
<keyword id="KW-0319">Glycerol metabolism</keyword>
<keyword id="KW-0418">Kinase</keyword>
<keyword id="KW-0547">Nucleotide-binding</keyword>
<keyword id="KW-1185">Reference proteome</keyword>
<keyword id="KW-0808">Transferase</keyword>
<reference key="1">
    <citation type="journal article" date="2003" name="Proc. Natl. Acad. Sci. U.S.A.">
        <title>Complete genome sequence of the marine planctomycete Pirellula sp. strain 1.</title>
        <authorList>
            <person name="Gloeckner F.O."/>
            <person name="Kube M."/>
            <person name="Bauer M."/>
            <person name="Teeling H."/>
            <person name="Lombardot T."/>
            <person name="Ludwig W."/>
            <person name="Gade D."/>
            <person name="Beck A."/>
            <person name="Borzym K."/>
            <person name="Heitmann K."/>
            <person name="Rabus R."/>
            <person name="Schlesner H."/>
            <person name="Amann R."/>
            <person name="Reinhardt R."/>
        </authorList>
    </citation>
    <scope>NUCLEOTIDE SEQUENCE [LARGE SCALE GENOMIC DNA]</scope>
    <source>
        <strain>DSM 10527 / NCIMB 13988 / SH1</strain>
    </source>
</reference>
<dbReference type="EC" id="2.7.1.30" evidence="1"/>
<dbReference type="EMBL" id="BX294139">
    <property type="protein sequence ID" value="CAD73392.1"/>
    <property type="molecule type" value="Genomic_DNA"/>
</dbReference>
<dbReference type="RefSeq" id="NP_865707.1">
    <property type="nucleotide sequence ID" value="NC_005027.1"/>
</dbReference>
<dbReference type="SMR" id="Q7UTP4"/>
<dbReference type="FunCoup" id="Q7UTP4">
    <property type="interactions" value="434"/>
</dbReference>
<dbReference type="STRING" id="243090.RB3762"/>
<dbReference type="EnsemblBacteria" id="CAD73392">
    <property type="protein sequence ID" value="CAD73392"/>
    <property type="gene ID" value="RB3762"/>
</dbReference>
<dbReference type="KEGG" id="rba:RB3762"/>
<dbReference type="PATRIC" id="fig|243090.15.peg.1749"/>
<dbReference type="eggNOG" id="COG0554">
    <property type="taxonomic scope" value="Bacteria"/>
</dbReference>
<dbReference type="HOGENOM" id="CLU_009281_2_3_0"/>
<dbReference type="InParanoid" id="Q7UTP4"/>
<dbReference type="OrthoDB" id="9805576at2"/>
<dbReference type="UniPathway" id="UPA00618">
    <property type="reaction ID" value="UER00672"/>
</dbReference>
<dbReference type="Proteomes" id="UP000001025">
    <property type="component" value="Chromosome"/>
</dbReference>
<dbReference type="GO" id="GO:0005829">
    <property type="term" value="C:cytosol"/>
    <property type="evidence" value="ECO:0000318"/>
    <property type="project" value="GO_Central"/>
</dbReference>
<dbReference type="GO" id="GO:0005524">
    <property type="term" value="F:ATP binding"/>
    <property type="evidence" value="ECO:0007669"/>
    <property type="project" value="UniProtKB-UniRule"/>
</dbReference>
<dbReference type="GO" id="GO:0004370">
    <property type="term" value="F:glycerol kinase activity"/>
    <property type="evidence" value="ECO:0000250"/>
    <property type="project" value="UniProtKB"/>
</dbReference>
<dbReference type="GO" id="GO:0019563">
    <property type="term" value="P:glycerol catabolic process"/>
    <property type="evidence" value="ECO:0000318"/>
    <property type="project" value="GO_Central"/>
</dbReference>
<dbReference type="GO" id="GO:0006071">
    <property type="term" value="P:glycerol metabolic process"/>
    <property type="evidence" value="ECO:0000250"/>
    <property type="project" value="UniProtKB"/>
</dbReference>
<dbReference type="GO" id="GO:0006072">
    <property type="term" value="P:glycerol-3-phosphate metabolic process"/>
    <property type="evidence" value="ECO:0007669"/>
    <property type="project" value="InterPro"/>
</dbReference>
<dbReference type="CDD" id="cd07786">
    <property type="entry name" value="FGGY_EcGK_like"/>
    <property type="match status" value="1"/>
</dbReference>
<dbReference type="FunFam" id="3.30.420.40:FF:000007">
    <property type="entry name" value="Glycerol kinase"/>
    <property type="match status" value="1"/>
</dbReference>
<dbReference type="FunFam" id="3.30.420.40:FF:000008">
    <property type="entry name" value="Glycerol kinase"/>
    <property type="match status" value="1"/>
</dbReference>
<dbReference type="Gene3D" id="3.30.420.40">
    <property type="match status" value="2"/>
</dbReference>
<dbReference type="HAMAP" id="MF_00186">
    <property type="entry name" value="Glycerol_kin"/>
    <property type="match status" value="1"/>
</dbReference>
<dbReference type="InterPro" id="IPR043129">
    <property type="entry name" value="ATPase_NBD"/>
</dbReference>
<dbReference type="InterPro" id="IPR000577">
    <property type="entry name" value="Carb_kinase_FGGY"/>
</dbReference>
<dbReference type="InterPro" id="IPR018483">
    <property type="entry name" value="Carb_kinase_FGGY_CS"/>
</dbReference>
<dbReference type="InterPro" id="IPR018485">
    <property type="entry name" value="FGGY_C"/>
</dbReference>
<dbReference type="InterPro" id="IPR018484">
    <property type="entry name" value="FGGY_N"/>
</dbReference>
<dbReference type="InterPro" id="IPR005999">
    <property type="entry name" value="Glycerol_kin"/>
</dbReference>
<dbReference type="NCBIfam" id="TIGR01311">
    <property type="entry name" value="glycerol_kin"/>
    <property type="match status" value="1"/>
</dbReference>
<dbReference type="NCBIfam" id="NF000756">
    <property type="entry name" value="PRK00047.1"/>
    <property type="match status" value="1"/>
</dbReference>
<dbReference type="PANTHER" id="PTHR10196:SF69">
    <property type="entry name" value="GLYCEROL KINASE"/>
    <property type="match status" value="1"/>
</dbReference>
<dbReference type="PANTHER" id="PTHR10196">
    <property type="entry name" value="SUGAR KINASE"/>
    <property type="match status" value="1"/>
</dbReference>
<dbReference type="Pfam" id="PF02782">
    <property type="entry name" value="FGGY_C"/>
    <property type="match status" value="1"/>
</dbReference>
<dbReference type="Pfam" id="PF00370">
    <property type="entry name" value="FGGY_N"/>
    <property type="match status" value="1"/>
</dbReference>
<dbReference type="PIRSF" id="PIRSF000538">
    <property type="entry name" value="GlpK"/>
    <property type="match status" value="1"/>
</dbReference>
<dbReference type="SUPFAM" id="SSF53067">
    <property type="entry name" value="Actin-like ATPase domain"/>
    <property type="match status" value="2"/>
</dbReference>
<dbReference type="PROSITE" id="PS00445">
    <property type="entry name" value="FGGY_KINASES_2"/>
    <property type="match status" value="1"/>
</dbReference>
<proteinExistence type="inferred from homology"/>
<gene>
    <name evidence="1" type="primary">glpK</name>
    <name type="ordered locus">RB3762</name>
</gene>